<gene>
    <name type="primary">argF</name>
</gene>
<keyword id="KW-0028">Amino-acid biosynthesis</keyword>
<keyword id="KW-0055">Arginine biosynthesis</keyword>
<keyword id="KW-0963">Cytoplasm</keyword>
<keyword id="KW-0903">Direct protein sequencing</keyword>
<keyword id="KW-0808">Transferase</keyword>
<reference key="1">
    <citation type="submission" date="1999-02" db="UniProtKB">
        <title>A 42 kDa protein with broad affinity to bind several plasma and ECM-proteins in lithium chloride extract of Staphylococcus epidermidis is ornithine carbamoyltransferase.</title>
        <authorList>
            <person name="Hussain M.S."/>
            <person name="Herrmann M."/>
            <person name="Chhatwal G.S."/>
            <person name="Peters G."/>
        </authorList>
    </citation>
    <scope>PROTEIN SEQUENCE</scope>
    <source>
        <strain>AB9</strain>
    </source>
</reference>
<dbReference type="EC" id="2.1.3.3"/>
<dbReference type="SMR" id="P0C0N0"/>
<dbReference type="UniPathway" id="UPA00068">
    <property type="reaction ID" value="UER00112"/>
</dbReference>
<dbReference type="GO" id="GO:0005737">
    <property type="term" value="C:cytoplasm"/>
    <property type="evidence" value="ECO:0007669"/>
    <property type="project" value="UniProtKB-SubCell"/>
</dbReference>
<dbReference type="GO" id="GO:0001968">
    <property type="term" value="F:fibronectin binding"/>
    <property type="evidence" value="ECO:0000314"/>
    <property type="project" value="CAFA"/>
</dbReference>
<dbReference type="GO" id="GO:0004585">
    <property type="term" value="F:ornithine carbamoyltransferase activity"/>
    <property type="evidence" value="ECO:0000314"/>
    <property type="project" value="CAFA"/>
</dbReference>
<dbReference type="GO" id="GO:0006526">
    <property type="term" value="P:L-arginine biosynthetic process"/>
    <property type="evidence" value="ECO:0007669"/>
    <property type="project" value="UniProtKB-UniPathway"/>
</dbReference>
<evidence type="ECO:0000250" key="1"/>
<evidence type="ECO:0000305" key="2"/>
<organism>
    <name type="scientific">Staphylococcus epidermidis</name>
    <dbReference type="NCBI Taxonomy" id="1282"/>
    <lineage>
        <taxon>Bacteria</taxon>
        <taxon>Bacillati</taxon>
        <taxon>Bacillota</taxon>
        <taxon>Bacilli</taxon>
        <taxon>Bacillales</taxon>
        <taxon>Staphylococcaceae</taxon>
        <taxon>Staphylococcus</taxon>
    </lineage>
</organism>
<feature type="chain" id="PRO_0000113021" description="Ornithine carbamoyltransferase">
    <location>
        <begin position="1"/>
        <end position="30" status="greater than"/>
    </location>
</feature>
<feature type="non-terminal residue">
    <location>
        <position position="30"/>
    </location>
</feature>
<protein>
    <recommendedName>
        <fullName>Ornithine carbamoyltransferase</fullName>
        <shortName>OTCase</shortName>
        <ecNumber>2.1.3.3</ecNumber>
    </recommendedName>
</protein>
<accession>P0C0N0</accession>
<accession>P81682</accession>
<name>OTC_STAEP</name>
<sequence length="30" mass="3629">MKNLRNRSFLTLLDFSRQEVEFLLTLSEDL</sequence>
<comment type="function">
    <text>Has vitronectin and fibronectin-binding activity.</text>
</comment>
<comment type="catalytic activity">
    <reaction>
        <text>carbamoyl phosphate + L-ornithine = L-citrulline + phosphate + H(+)</text>
        <dbReference type="Rhea" id="RHEA:19513"/>
        <dbReference type="ChEBI" id="CHEBI:15378"/>
        <dbReference type="ChEBI" id="CHEBI:43474"/>
        <dbReference type="ChEBI" id="CHEBI:46911"/>
        <dbReference type="ChEBI" id="CHEBI:57743"/>
        <dbReference type="ChEBI" id="CHEBI:58228"/>
        <dbReference type="EC" id="2.1.3.3"/>
    </reaction>
</comment>
<comment type="pathway">
    <text>Amino-acid biosynthesis; L-arginine biosynthesis; L-arginine from L-ornithine and carbamoyl phosphate: step 1/3.</text>
</comment>
<comment type="subcellular location">
    <subcellularLocation>
        <location evidence="1">Cytoplasm</location>
    </subcellularLocation>
</comment>
<comment type="similarity">
    <text evidence="2">Belongs to the aspartate/ornithine carbamoyltransferase superfamily. OTCase family.</text>
</comment>
<proteinExistence type="evidence at protein level"/>